<protein>
    <recommendedName>
        <fullName evidence="1">Nuclear export protein</fullName>
        <shortName evidence="1">NEP</shortName>
    </recommendedName>
    <alternativeName>
        <fullName evidence="1">Non-structural protein 2</fullName>
        <shortName evidence="1">NS2</shortName>
    </alternativeName>
</protein>
<name>NEP_I76A0</name>
<keyword id="KW-0025">Alternative splicing</keyword>
<keyword id="KW-1048">Host nucleus</keyword>
<keyword id="KW-0945">Host-virus interaction</keyword>
<keyword id="KW-0813">Transport</keyword>
<keyword id="KW-0946">Virion</keyword>
<accession>P30913</accession>
<gene>
    <name evidence="1" type="primary">NS</name>
</gene>
<sequence length="121" mass="14370">MDSNTVSSFQDILMRMSKMQLGSSSEDLNGMITQFESLKLYRDSLGEAVMRMGDLHSLQSRNGKWREQLSQKFEEIRWLIEEMRHRLKITENSFEQITFMQALQLLLEVEQEIRTFSFQLI</sequence>
<evidence type="ECO:0000255" key="1">
    <source>
        <dbReference type="HAMAP-Rule" id="MF_04067"/>
    </source>
</evidence>
<organismHost>
    <name type="scientific">Aves</name>
    <dbReference type="NCBI Taxonomy" id="8782"/>
</organismHost>
<feature type="chain" id="PRO_0000078975" description="Nuclear export protein">
    <location>
        <begin position="1"/>
        <end position="121"/>
    </location>
</feature>
<feature type="short sequence motif" description="Nuclear export signal" evidence="1">
    <location>
        <begin position="12"/>
        <end position="21"/>
    </location>
</feature>
<feature type="short sequence motif" description="Nuclear export signal" evidence="1">
    <location>
        <begin position="85"/>
        <end position="94"/>
    </location>
</feature>
<dbReference type="EMBL" id="M60800">
    <property type="protein sequence ID" value="AAV41219.1"/>
    <property type="molecule type" value="Genomic_RNA"/>
</dbReference>
<dbReference type="SMR" id="P30913"/>
<dbReference type="GO" id="GO:0042025">
    <property type="term" value="C:host cell nucleus"/>
    <property type="evidence" value="ECO:0007669"/>
    <property type="project" value="UniProtKB-SubCell"/>
</dbReference>
<dbReference type="GO" id="GO:0044423">
    <property type="term" value="C:virion component"/>
    <property type="evidence" value="ECO:0007669"/>
    <property type="project" value="UniProtKB-UniRule"/>
</dbReference>
<dbReference type="GO" id="GO:0039675">
    <property type="term" value="P:exit of virus from host cell nucleus through nuclear pore"/>
    <property type="evidence" value="ECO:0007669"/>
    <property type="project" value="UniProtKB-UniRule"/>
</dbReference>
<dbReference type="Gene3D" id="1.10.287.230">
    <property type="match status" value="1"/>
</dbReference>
<dbReference type="Gene3D" id="1.10.287.10">
    <property type="entry name" value="S15/NS1, RNA-binding"/>
    <property type="match status" value="1"/>
</dbReference>
<dbReference type="HAMAP" id="MF_04067">
    <property type="entry name" value="INFV_NEP"/>
    <property type="match status" value="1"/>
</dbReference>
<dbReference type="InterPro" id="IPR000968">
    <property type="entry name" value="Flu_NS2"/>
</dbReference>
<dbReference type="Pfam" id="PF00601">
    <property type="entry name" value="Flu_NS2"/>
    <property type="match status" value="1"/>
</dbReference>
<dbReference type="SUPFAM" id="SSF101156">
    <property type="entry name" value="Nonstructural protein ns2, Nep, M1-binding domain"/>
    <property type="match status" value="1"/>
</dbReference>
<reference key="1">
    <citation type="journal article" date="1991" name="Virology">
        <title>Phylogenetic relationship of the nonstructural (NS) genes of influenza A viruses.</title>
        <authorList>
            <person name="Ludwig S."/>
            <person name="Schultz U."/>
            <person name="Mandler J."/>
            <person name="Fitch W.M."/>
            <person name="Scholtissek C."/>
        </authorList>
    </citation>
    <scope>NUCLEOTIDE SEQUENCE [GENOMIC RNA]</scope>
</reference>
<proteinExistence type="inferred from homology"/>
<comment type="function">
    <text evidence="1">Mediates the nuclear export of encapsidated genomic RNAs (ribonucleoproteins, RNPs). Acts as an adapter between viral RNPs complexes and the nuclear export machinery of the cell. Possesses no intrinsic RNA-binding activity, but includes a C-terminal M1-binding domain. This domain is believed to allow recognition of RNPs bound to the protein M1. Since protein M1 is not available in large quantities before late stages of infection, such an indirect recognition mechanism probably ensures that genomic RNPs are not exported from the host nucleus until sufficient quantities of viral mRNA and progeny genomic RNA have been synthesized. Furthermore, the RNPs enter the host cytoplasm only when associated with the M1 protein that is necessary to guide them to the plasma membrane. May down-regulate viral RNA synthesis when overproduced.</text>
</comment>
<comment type="subunit">
    <text evidence="1">Interacts with protein M1. May interact with host nucleoporin RAB/HRB and exportin XPO1/CRM1.</text>
</comment>
<comment type="subcellular location">
    <subcellularLocation>
        <location evidence="1">Virion</location>
    </subcellularLocation>
    <subcellularLocation>
        <location evidence="1">Host nucleus</location>
    </subcellularLocation>
</comment>
<comment type="alternative products">
    <event type="alternative splicing"/>
    <isoform>
        <id>P30913-1</id>
        <name>NEP</name>
        <name>NS2</name>
        <sequence type="displayed"/>
    </isoform>
    <isoform>
        <id>P69252-1</id>
        <name>NS1</name>
        <sequence type="external"/>
    </isoform>
</comment>
<comment type="miscellaneous">
    <text>Average number present in a viral particle is estimated to be 130-200 molecules.</text>
</comment>
<comment type="similarity">
    <text evidence="1">Belongs to the influenza viruses NEP family.</text>
</comment>
<organism>
    <name type="scientific">Influenza A virus (strain A/Anas acuta/Primorje/695/1976 H2N3)</name>
    <dbReference type="NCBI Taxonomy" id="383602"/>
    <lineage>
        <taxon>Viruses</taxon>
        <taxon>Riboviria</taxon>
        <taxon>Orthornavirae</taxon>
        <taxon>Negarnaviricota</taxon>
        <taxon>Polyploviricotina</taxon>
        <taxon>Insthoviricetes</taxon>
        <taxon>Articulavirales</taxon>
        <taxon>Orthomyxoviridae</taxon>
        <taxon>Alphainfluenzavirus</taxon>
        <taxon>Alphainfluenzavirus influenzae</taxon>
        <taxon>Influenza A virus</taxon>
    </lineage>
</organism>